<dbReference type="EMBL" id="CR555306">
    <property type="protein sequence ID" value="CAI08108.1"/>
    <property type="molecule type" value="Genomic_DNA"/>
</dbReference>
<dbReference type="RefSeq" id="WP_011237801.1">
    <property type="nucleotide sequence ID" value="NC_006513.1"/>
</dbReference>
<dbReference type="SMR" id="Q5P3K6"/>
<dbReference type="STRING" id="76114.ebB113"/>
<dbReference type="KEGG" id="eba:ebB113"/>
<dbReference type="eggNOG" id="COG2332">
    <property type="taxonomic scope" value="Bacteria"/>
</dbReference>
<dbReference type="HOGENOM" id="CLU_079503_1_1_4"/>
<dbReference type="OrthoDB" id="9793584at2"/>
<dbReference type="Proteomes" id="UP000006552">
    <property type="component" value="Chromosome"/>
</dbReference>
<dbReference type="GO" id="GO:0005886">
    <property type="term" value="C:plasma membrane"/>
    <property type="evidence" value="ECO:0007669"/>
    <property type="project" value="UniProtKB-SubCell"/>
</dbReference>
<dbReference type="GO" id="GO:0020037">
    <property type="term" value="F:heme binding"/>
    <property type="evidence" value="ECO:0007669"/>
    <property type="project" value="InterPro"/>
</dbReference>
<dbReference type="GO" id="GO:0046872">
    <property type="term" value="F:metal ion binding"/>
    <property type="evidence" value="ECO:0007669"/>
    <property type="project" value="UniProtKB-KW"/>
</dbReference>
<dbReference type="GO" id="GO:0017004">
    <property type="term" value="P:cytochrome complex assembly"/>
    <property type="evidence" value="ECO:0007669"/>
    <property type="project" value="UniProtKB-KW"/>
</dbReference>
<dbReference type="FunFam" id="2.40.50.140:FF:000104">
    <property type="entry name" value="Cytochrome c-type biogenesis protein CcmE"/>
    <property type="match status" value="1"/>
</dbReference>
<dbReference type="Gene3D" id="2.40.50.140">
    <property type="entry name" value="Nucleic acid-binding proteins"/>
    <property type="match status" value="1"/>
</dbReference>
<dbReference type="HAMAP" id="MF_01959">
    <property type="entry name" value="CcmE"/>
    <property type="match status" value="1"/>
</dbReference>
<dbReference type="InterPro" id="IPR004329">
    <property type="entry name" value="CcmE"/>
</dbReference>
<dbReference type="InterPro" id="IPR036127">
    <property type="entry name" value="CcmE-like_sf"/>
</dbReference>
<dbReference type="InterPro" id="IPR012340">
    <property type="entry name" value="NA-bd_OB-fold"/>
</dbReference>
<dbReference type="NCBIfam" id="NF009727">
    <property type="entry name" value="PRK13254.1-1"/>
    <property type="match status" value="1"/>
</dbReference>
<dbReference type="NCBIfam" id="NF009729">
    <property type="entry name" value="PRK13254.1-3"/>
    <property type="match status" value="1"/>
</dbReference>
<dbReference type="NCBIfam" id="NF009731">
    <property type="entry name" value="PRK13254.1-5"/>
    <property type="match status" value="1"/>
</dbReference>
<dbReference type="PANTHER" id="PTHR34128">
    <property type="entry name" value="CYTOCHROME C-TYPE BIOGENESIS PROTEIN CCME HOMOLOG, MITOCHONDRIAL"/>
    <property type="match status" value="1"/>
</dbReference>
<dbReference type="PANTHER" id="PTHR34128:SF2">
    <property type="entry name" value="CYTOCHROME C-TYPE BIOGENESIS PROTEIN CCME HOMOLOG, MITOCHONDRIAL"/>
    <property type="match status" value="1"/>
</dbReference>
<dbReference type="Pfam" id="PF03100">
    <property type="entry name" value="CcmE"/>
    <property type="match status" value="1"/>
</dbReference>
<dbReference type="SUPFAM" id="SSF82093">
    <property type="entry name" value="Heme chaperone CcmE"/>
    <property type="match status" value="1"/>
</dbReference>
<comment type="function">
    <text evidence="1">Heme chaperone required for the biogenesis of c-type cytochromes. Transiently binds heme delivered by CcmC and transfers the heme to apo-cytochromes in a process facilitated by CcmF and CcmH.</text>
</comment>
<comment type="subcellular location">
    <subcellularLocation>
        <location evidence="1">Cell inner membrane</location>
        <topology evidence="1">Single-pass type II membrane protein</topology>
        <orientation evidence="1">Periplasmic side</orientation>
    </subcellularLocation>
</comment>
<comment type="similarity">
    <text evidence="1">Belongs to the CcmE/CycJ family.</text>
</comment>
<name>CCME_AROAE</name>
<evidence type="ECO:0000255" key="1">
    <source>
        <dbReference type="HAMAP-Rule" id="MF_01959"/>
    </source>
</evidence>
<gene>
    <name evidence="1" type="primary">ccmE</name>
    <name evidence="1" type="synonym">cycJ</name>
    <name type="ordered locus">AZOSEA19830</name>
    <name type="ORF">ebB113</name>
</gene>
<proteinExistence type="inferred from homology"/>
<reference key="1">
    <citation type="journal article" date="2005" name="Arch. Microbiol.">
        <title>The genome sequence of an anaerobic aromatic-degrading denitrifying bacterium, strain EbN1.</title>
        <authorList>
            <person name="Rabus R."/>
            <person name="Kube M."/>
            <person name="Heider J."/>
            <person name="Beck A."/>
            <person name="Heitmann K."/>
            <person name="Widdel F."/>
            <person name="Reinhardt R."/>
        </authorList>
    </citation>
    <scope>NUCLEOTIDE SEQUENCE [LARGE SCALE GENOMIC DNA]</scope>
    <source>
        <strain>DSM 19018 / LMG 30748 / EbN1</strain>
    </source>
</reference>
<accession>Q5P3K6</accession>
<sequence>MKPRSKRLLLVAGAVALLVGAVALVLNAFQQNLVFFHTPTEVAEGKAPVGRAFRIGGMVETGSIRRAADGVTVQFAITDTAKVIPVSYKGSLPDLFSEGKGAVVQGTLGPDGQFQASEVLAKHDENYMPPEAQHAVDQAQKAAQTVQQ</sequence>
<feature type="chain" id="PRO_0000238793" description="Cytochrome c-type biogenesis protein CcmE">
    <location>
        <begin position="1"/>
        <end position="148"/>
    </location>
</feature>
<feature type="topological domain" description="Cytoplasmic" evidence="1">
    <location>
        <begin position="1"/>
        <end position="7"/>
    </location>
</feature>
<feature type="transmembrane region" description="Helical; Signal-anchor for type II membrane protein" evidence="1">
    <location>
        <begin position="8"/>
        <end position="28"/>
    </location>
</feature>
<feature type="topological domain" description="Periplasmic" evidence="1">
    <location>
        <begin position="29"/>
        <end position="148"/>
    </location>
</feature>
<feature type="binding site" description="covalent" evidence="1">
    <location>
        <position position="123"/>
    </location>
    <ligand>
        <name>heme</name>
        <dbReference type="ChEBI" id="CHEBI:30413"/>
    </ligand>
</feature>
<feature type="binding site" description="axial binding residue" evidence="1">
    <location>
        <position position="127"/>
    </location>
    <ligand>
        <name>heme</name>
        <dbReference type="ChEBI" id="CHEBI:30413"/>
    </ligand>
    <ligandPart>
        <name>Fe</name>
        <dbReference type="ChEBI" id="CHEBI:18248"/>
    </ligandPart>
</feature>
<protein>
    <recommendedName>
        <fullName evidence="1">Cytochrome c-type biogenesis protein CcmE</fullName>
    </recommendedName>
    <alternativeName>
        <fullName evidence="1">Cytochrome c maturation protein E</fullName>
    </alternativeName>
    <alternativeName>
        <fullName evidence="1">Heme chaperone CcmE</fullName>
    </alternativeName>
</protein>
<organism>
    <name type="scientific">Aromatoleum aromaticum (strain DSM 19018 / LMG 30748 / EbN1)</name>
    <name type="common">Azoarcus sp. (strain EbN1)</name>
    <dbReference type="NCBI Taxonomy" id="76114"/>
    <lineage>
        <taxon>Bacteria</taxon>
        <taxon>Pseudomonadati</taxon>
        <taxon>Pseudomonadota</taxon>
        <taxon>Betaproteobacteria</taxon>
        <taxon>Rhodocyclales</taxon>
        <taxon>Rhodocyclaceae</taxon>
        <taxon>Aromatoleum</taxon>
    </lineage>
</organism>
<keyword id="KW-0997">Cell inner membrane</keyword>
<keyword id="KW-1003">Cell membrane</keyword>
<keyword id="KW-0201">Cytochrome c-type biogenesis</keyword>
<keyword id="KW-0349">Heme</keyword>
<keyword id="KW-0408">Iron</keyword>
<keyword id="KW-0472">Membrane</keyword>
<keyword id="KW-0479">Metal-binding</keyword>
<keyword id="KW-1185">Reference proteome</keyword>
<keyword id="KW-0735">Signal-anchor</keyword>
<keyword id="KW-0812">Transmembrane</keyword>
<keyword id="KW-1133">Transmembrane helix</keyword>